<organism>
    <name type="scientific">Bacillus anthracis</name>
    <dbReference type="NCBI Taxonomy" id="1392"/>
    <lineage>
        <taxon>Bacteria</taxon>
        <taxon>Bacillati</taxon>
        <taxon>Bacillota</taxon>
        <taxon>Bacilli</taxon>
        <taxon>Bacillales</taxon>
        <taxon>Bacillaceae</taxon>
        <taxon>Bacillus</taxon>
        <taxon>Bacillus cereus group</taxon>
    </lineage>
</organism>
<gene>
    <name evidence="1" type="primary">gcvPB</name>
    <name type="ordered locus">BA_4447</name>
    <name type="ordered locus">GBAA_4447</name>
    <name type="ordered locus">BAS4129</name>
</gene>
<dbReference type="EC" id="1.4.4.2" evidence="1"/>
<dbReference type="EMBL" id="AE016879">
    <property type="protein sequence ID" value="AAP28161.1"/>
    <property type="molecule type" value="Genomic_DNA"/>
</dbReference>
<dbReference type="EMBL" id="AE017334">
    <property type="protein sequence ID" value="AAT33566.1"/>
    <property type="molecule type" value="Genomic_DNA"/>
</dbReference>
<dbReference type="EMBL" id="AE017225">
    <property type="protein sequence ID" value="AAT56429.1"/>
    <property type="molecule type" value="Genomic_DNA"/>
</dbReference>
<dbReference type="RefSeq" id="NP_846675.1">
    <property type="nucleotide sequence ID" value="NC_003997.3"/>
</dbReference>
<dbReference type="RefSeq" id="WP_000795698.1">
    <property type="nucleotide sequence ID" value="NZ_WXXJ01000027.1"/>
</dbReference>
<dbReference type="RefSeq" id="YP_030378.1">
    <property type="nucleotide sequence ID" value="NC_005945.1"/>
</dbReference>
<dbReference type="SMR" id="Q81M08"/>
<dbReference type="STRING" id="261594.GBAA_4447"/>
<dbReference type="DNASU" id="1087836"/>
<dbReference type="GeneID" id="93006875"/>
<dbReference type="KEGG" id="ban:BA_4447"/>
<dbReference type="KEGG" id="bar:GBAA_4447"/>
<dbReference type="KEGG" id="bat:BAS4129"/>
<dbReference type="PATRIC" id="fig|198094.11.peg.4417"/>
<dbReference type="eggNOG" id="COG1003">
    <property type="taxonomic scope" value="Bacteria"/>
</dbReference>
<dbReference type="HOGENOM" id="CLU_004620_5_0_9"/>
<dbReference type="OMA" id="FPLIVHE"/>
<dbReference type="OrthoDB" id="9801272at2"/>
<dbReference type="Proteomes" id="UP000000427">
    <property type="component" value="Chromosome"/>
</dbReference>
<dbReference type="Proteomes" id="UP000000594">
    <property type="component" value="Chromosome"/>
</dbReference>
<dbReference type="GO" id="GO:0005829">
    <property type="term" value="C:cytosol"/>
    <property type="evidence" value="ECO:0007669"/>
    <property type="project" value="TreeGrafter"/>
</dbReference>
<dbReference type="GO" id="GO:0005960">
    <property type="term" value="C:glycine cleavage complex"/>
    <property type="evidence" value="ECO:0007669"/>
    <property type="project" value="TreeGrafter"/>
</dbReference>
<dbReference type="GO" id="GO:0016594">
    <property type="term" value="F:glycine binding"/>
    <property type="evidence" value="ECO:0007669"/>
    <property type="project" value="TreeGrafter"/>
</dbReference>
<dbReference type="GO" id="GO:0004375">
    <property type="term" value="F:glycine dehydrogenase (decarboxylating) activity"/>
    <property type="evidence" value="ECO:0007669"/>
    <property type="project" value="UniProtKB-EC"/>
</dbReference>
<dbReference type="GO" id="GO:0030170">
    <property type="term" value="F:pyridoxal phosphate binding"/>
    <property type="evidence" value="ECO:0007669"/>
    <property type="project" value="TreeGrafter"/>
</dbReference>
<dbReference type="GO" id="GO:0019464">
    <property type="term" value="P:glycine decarboxylation via glycine cleavage system"/>
    <property type="evidence" value="ECO:0007669"/>
    <property type="project" value="UniProtKB-UniRule"/>
</dbReference>
<dbReference type="CDD" id="cd00613">
    <property type="entry name" value="GDC-P"/>
    <property type="match status" value="1"/>
</dbReference>
<dbReference type="FunFam" id="3.40.640.10:FF:000034">
    <property type="entry name" value="Probable glycine dehydrogenase (decarboxylating) subunit 2"/>
    <property type="match status" value="1"/>
</dbReference>
<dbReference type="FunFam" id="3.90.1150.10:FF:000014">
    <property type="entry name" value="Probable glycine dehydrogenase (decarboxylating) subunit 2"/>
    <property type="match status" value="1"/>
</dbReference>
<dbReference type="Gene3D" id="6.20.440.10">
    <property type="match status" value="1"/>
</dbReference>
<dbReference type="Gene3D" id="3.90.1150.10">
    <property type="entry name" value="Aspartate Aminotransferase, domain 1"/>
    <property type="match status" value="1"/>
</dbReference>
<dbReference type="Gene3D" id="3.40.640.10">
    <property type="entry name" value="Type I PLP-dependent aspartate aminotransferase-like (Major domain)"/>
    <property type="match status" value="1"/>
</dbReference>
<dbReference type="HAMAP" id="MF_00713">
    <property type="entry name" value="GcvPB"/>
    <property type="match status" value="1"/>
</dbReference>
<dbReference type="InterPro" id="IPR023012">
    <property type="entry name" value="GcvPB"/>
</dbReference>
<dbReference type="InterPro" id="IPR049316">
    <property type="entry name" value="GDC-P_C"/>
</dbReference>
<dbReference type="InterPro" id="IPR049315">
    <property type="entry name" value="GDC-P_N"/>
</dbReference>
<dbReference type="InterPro" id="IPR020581">
    <property type="entry name" value="GDC_P"/>
</dbReference>
<dbReference type="InterPro" id="IPR015424">
    <property type="entry name" value="PyrdxlP-dep_Trfase"/>
</dbReference>
<dbReference type="InterPro" id="IPR015421">
    <property type="entry name" value="PyrdxlP-dep_Trfase_major"/>
</dbReference>
<dbReference type="InterPro" id="IPR015422">
    <property type="entry name" value="PyrdxlP-dep_Trfase_small"/>
</dbReference>
<dbReference type="NCBIfam" id="NF003346">
    <property type="entry name" value="PRK04366.1"/>
    <property type="match status" value="1"/>
</dbReference>
<dbReference type="PANTHER" id="PTHR11773:SF1">
    <property type="entry name" value="GLYCINE DEHYDROGENASE (DECARBOXYLATING), MITOCHONDRIAL"/>
    <property type="match status" value="1"/>
</dbReference>
<dbReference type="PANTHER" id="PTHR11773">
    <property type="entry name" value="GLYCINE DEHYDROGENASE, DECARBOXYLATING"/>
    <property type="match status" value="1"/>
</dbReference>
<dbReference type="Pfam" id="PF21478">
    <property type="entry name" value="GcvP2_C"/>
    <property type="match status" value="1"/>
</dbReference>
<dbReference type="Pfam" id="PF02347">
    <property type="entry name" value="GDC-P"/>
    <property type="match status" value="1"/>
</dbReference>
<dbReference type="SUPFAM" id="SSF53383">
    <property type="entry name" value="PLP-dependent transferases"/>
    <property type="match status" value="1"/>
</dbReference>
<name>GCSPB_BACAN</name>
<comment type="function">
    <text evidence="1">The glycine cleavage system catalyzes the degradation of glycine. The P protein binds the alpha-amino group of glycine through its pyridoxal phosphate cofactor; CO(2) is released and the remaining methylamine moiety is then transferred to the lipoamide cofactor of the H protein.</text>
</comment>
<comment type="catalytic activity">
    <reaction evidence="1">
        <text>N(6)-[(R)-lipoyl]-L-lysyl-[glycine-cleavage complex H protein] + glycine + H(+) = N(6)-[(R)-S(8)-aminomethyldihydrolipoyl]-L-lysyl-[glycine-cleavage complex H protein] + CO2</text>
        <dbReference type="Rhea" id="RHEA:24304"/>
        <dbReference type="Rhea" id="RHEA-COMP:10494"/>
        <dbReference type="Rhea" id="RHEA-COMP:10495"/>
        <dbReference type="ChEBI" id="CHEBI:15378"/>
        <dbReference type="ChEBI" id="CHEBI:16526"/>
        <dbReference type="ChEBI" id="CHEBI:57305"/>
        <dbReference type="ChEBI" id="CHEBI:83099"/>
        <dbReference type="ChEBI" id="CHEBI:83143"/>
        <dbReference type="EC" id="1.4.4.2"/>
    </reaction>
</comment>
<comment type="cofactor">
    <cofactor evidence="1">
        <name>pyridoxal 5'-phosphate</name>
        <dbReference type="ChEBI" id="CHEBI:597326"/>
    </cofactor>
</comment>
<comment type="subunit">
    <text evidence="1">The glycine cleavage system is composed of four proteins: P, T, L and H. In this organism, the P 'protein' is a heterodimer of two subunits.</text>
</comment>
<comment type="similarity">
    <text evidence="1">Belongs to the GcvP family. C-terminal subunit subfamily.</text>
</comment>
<accession>Q81M08</accession>
<accession>Q6HTG0</accession>
<accession>Q6KMQ3</accession>
<keyword id="KW-0560">Oxidoreductase</keyword>
<keyword id="KW-0663">Pyridoxal phosphate</keyword>
<keyword id="KW-1185">Reference proteome</keyword>
<protein>
    <recommendedName>
        <fullName evidence="1">Probable glycine dehydrogenase (decarboxylating) subunit 2</fullName>
        <ecNumber evidence="1">1.4.4.2</ecNumber>
    </recommendedName>
    <alternativeName>
        <fullName evidence="1">Glycine cleavage system P-protein subunit 2</fullName>
    </alternativeName>
    <alternativeName>
        <fullName evidence="1">Glycine decarboxylase subunit 2</fullName>
    </alternativeName>
    <alternativeName>
        <fullName evidence="1">Glycine dehydrogenase (aminomethyl-transferring) subunit 2</fullName>
    </alternativeName>
</protein>
<feature type="chain" id="PRO_0000166994" description="Probable glycine dehydrogenase (decarboxylating) subunit 2">
    <location>
        <begin position="1"/>
        <end position="491"/>
    </location>
</feature>
<feature type="modified residue" description="N6-(pyridoxal phosphate)lysine" evidence="1">
    <location>
        <position position="273"/>
    </location>
</feature>
<proteinExistence type="inferred from homology"/>
<sequence length="491" mass="54865">MKNQDQALIFEVSKEGRIGYSLPKLDVEEVKLEDVFESDYIRVEDAELPEVSELDIMRHYTALSNRNHGVDSGFYPLGSCTMKYNPKINESVARFAGFANIHPLQDEKTVQGAMELMYDLQEHLIEITGMDTVTLQPAAGAHGEWTGLMLIRAYHEANGDFNRTKVIVPDSAHGTNPASATVAGFETITVKSNEHGLVDLEDLKRVVNEETAALMLTNPNTLGLFEENILEMAEIVHNAGGKLYYDGANLNAVLSQARPGDMGFDVVHLNLHKTFTGPHGGGGPGSGPVGVKADLIPYLPKPILEKTENGYHFNYDRPEAIGRVKPFYGNFGINVRAYTYIRSMGPDGLRAVTEYAVLNANYMMRRLAPFYDLPFDRHCKHEFVLSGRRQKKLGVRTLDIAKRLLDFGYHPPTIYFPLNVEECIMIEPTETESKETLDGFIDKMIQIAKEVEENPEVVQEAPHTTVIKRLDETMAARKPVLRYAKPAPVQV</sequence>
<evidence type="ECO:0000255" key="1">
    <source>
        <dbReference type="HAMAP-Rule" id="MF_00713"/>
    </source>
</evidence>
<reference key="1">
    <citation type="journal article" date="2003" name="Nature">
        <title>The genome sequence of Bacillus anthracis Ames and comparison to closely related bacteria.</title>
        <authorList>
            <person name="Read T.D."/>
            <person name="Peterson S.N."/>
            <person name="Tourasse N.J."/>
            <person name="Baillie L.W."/>
            <person name="Paulsen I.T."/>
            <person name="Nelson K.E."/>
            <person name="Tettelin H."/>
            <person name="Fouts D.E."/>
            <person name="Eisen J.A."/>
            <person name="Gill S.R."/>
            <person name="Holtzapple E.K."/>
            <person name="Okstad O.A."/>
            <person name="Helgason E."/>
            <person name="Rilstone J."/>
            <person name="Wu M."/>
            <person name="Kolonay J.F."/>
            <person name="Beanan M.J."/>
            <person name="Dodson R.J."/>
            <person name="Brinkac L.M."/>
            <person name="Gwinn M.L."/>
            <person name="DeBoy R.T."/>
            <person name="Madpu R."/>
            <person name="Daugherty S.C."/>
            <person name="Durkin A.S."/>
            <person name="Haft D.H."/>
            <person name="Nelson W.C."/>
            <person name="Peterson J.D."/>
            <person name="Pop M."/>
            <person name="Khouri H.M."/>
            <person name="Radune D."/>
            <person name="Benton J.L."/>
            <person name="Mahamoud Y."/>
            <person name="Jiang L."/>
            <person name="Hance I.R."/>
            <person name="Weidman J.F."/>
            <person name="Berry K.J."/>
            <person name="Plaut R.D."/>
            <person name="Wolf A.M."/>
            <person name="Watkins K.L."/>
            <person name="Nierman W.C."/>
            <person name="Hazen A."/>
            <person name="Cline R.T."/>
            <person name="Redmond C."/>
            <person name="Thwaite J.E."/>
            <person name="White O."/>
            <person name="Salzberg S.L."/>
            <person name="Thomason B."/>
            <person name="Friedlander A.M."/>
            <person name="Koehler T.M."/>
            <person name="Hanna P.C."/>
            <person name="Kolstoe A.-B."/>
            <person name="Fraser C.M."/>
        </authorList>
    </citation>
    <scope>NUCLEOTIDE SEQUENCE [LARGE SCALE GENOMIC DNA]</scope>
    <source>
        <strain>Ames / isolate Porton</strain>
    </source>
</reference>
<reference key="2">
    <citation type="journal article" date="2009" name="J. Bacteriol.">
        <title>The complete genome sequence of Bacillus anthracis Ames 'Ancestor'.</title>
        <authorList>
            <person name="Ravel J."/>
            <person name="Jiang L."/>
            <person name="Stanley S.T."/>
            <person name="Wilson M.R."/>
            <person name="Decker R.S."/>
            <person name="Read T.D."/>
            <person name="Worsham P."/>
            <person name="Keim P.S."/>
            <person name="Salzberg S.L."/>
            <person name="Fraser-Liggett C.M."/>
            <person name="Rasko D.A."/>
        </authorList>
    </citation>
    <scope>NUCLEOTIDE SEQUENCE [LARGE SCALE GENOMIC DNA]</scope>
    <source>
        <strain>Ames ancestor</strain>
    </source>
</reference>
<reference key="3">
    <citation type="submission" date="2004-01" db="EMBL/GenBank/DDBJ databases">
        <title>Complete genome sequence of Bacillus anthracis Sterne.</title>
        <authorList>
            <person name="Brettin T.S."/>
            <person name="Bruce D."/>
            <person name="Challacombe J.F."/>
            <person name="Gilna P."/>
            <person name="Han C."/>
            <person name="Hill K."/>
            <person name="Hitchcock P."/>
            <person name="Jackson P."/>
            <person name="Keim P."/>
            <person name="Longmire J."/>
            <person name="Lucas S."/>
            <person name="Okinaka R."/>
            <person name="Richardson P."/>
            <person name="Rubin E."/>
            <person name="Tice H."/>
        </authorList>
    </citation>
    <scope>NUCLEOTIDE SEQUENCE [LARGE SCALE GENOMIC DNA]</scope>
    <source>
        <strain>Sterne</strain>
    </source>
</reference>